<protein>
    <recommendedName>
        <fullName evidence="1">Probable septum site-determining protein MinC</fullName>
    </recommendedName>
</protein>
<keyword id="KW-0131">Cell cycle</keyword>
<keyword id="KW-0132">Cell division</keyword>
<keyword id="KW-1185">Reference proteome</keyword>
<keyword id="KW-0717">Septation</keyword>
<accession>A7ZKU7</accession>
<feature type="chain" id="PRO_1000059116" description="Probable septum site-determining protein MinC">
    <location>
        <begin position="1"/>
        <end position="231"/>
    </location>
</feature>
<feature type="region of interest" description="Disordered" evidence="2">
    <location>
        <begin position="102"/>
        <end position="125"/>
    </location>
</feature>
<name>MINC_ECO24</name>
<comment type="function">
    <text evidence="1">Cell division inhibitor that blocks the formation of polar Z ring septums. Rapidly oscillates between the poles of the cell to destabilize FtsZ filaments that have formed before they mature into polar Z rings. Prevents FtsZ polymerization.</text>
</comment>
<comment type="subunit">
    <text evidence="1">Interacts with MinD and FtsZ.</text>
</comment>
<comment type="similarity">
    <text evidence="1">Belongs to the MinC family.</text>
</comment>
<sequence length="231" mass="24745">MSNTPIELKGSSFTLSVVHLHEAEPKVIHQALEDKIAQAPAFLKHAPVVLNVSALEDPVNWSAMHKAVSATGLRVIGVSGCKDAQLKAEIEKMGLPILTEGKEKAPRPAPAPQAPAQNTTPVTKTRLIDTPVRSGQRIYAPQCDLIVTSHVSAGAELIADGNIHVYGMMRGRALAGASGDRETQIFCTNLMAELVSIAGEYWLSDQIPAEFYGKAARLQLVENALTVQPLN</sequence>
<dbReference type="EMBL" id="CP000800">
    <property type="protein sequence ID" value="ABV20520.1"/>
    <property type="molecule type" value="Genomic_DNA"/>
</dbReference>
<dbReference type="RefSeq" id="WP_000072536.1">
    <property type="nucleotide sequence ID" value="NC_009801.1"/>
</dbReference>
<dbReference type="SMR" id="A7ZKU7"/>
<dbReference type="GeneID" id="93776258"/>
<dbReference type="KEGG" id="ecw:EcE24377A_1320"/>
<dbReference type="HOGENOM" id="CLU_067812_0_1_6"/>
<dbReference type="Proteomes" id="UP000001122">
    <property type="component" value="Chromosome"/>
</dbReference>
<dbReference type="GO" id="GO:0000902">
    <property type="term" value="P:cell morphogenesis"/>
    <property type="evidence" value="ECO:0007669"/>
    <property type="project" value="InterPro"/>
</dbReference>
<dbReference type="GO" id="GO:0000917">
    <property type="term" value="P:division septum assembly"/>
    <property type="evidence" value="ECO:0007669"/>
    <property type="project" value="UniProtKB-KW"/>
</dbReference>
<dbReference type="GO" id="GO:0051302">
    <property type="term" value="P:regulation of cell division"/>
    <property type="evidence" value="ECO:0007669"/>
    <property type="project" value="InterPro"/>
</dbReference>
<dbReference type="GO" id="GO:1901891">
    <property type="term" value="P:regulation of cell septum assembly"/>
    <property type="evidence" value="ECO:0007669"/>
    <property type="project" value="InterPro"/>
</dbReference>
<dbReference type="FunFam" id="2.160.20.70:FF:000002">
    <property type="entry name" value="Probable septum site-determining protein MinC"/>
    <property type="match status" value="1"/>
</dbReference>
<dbReference type="Gene3D" id="2.160.20.70">
    <property type="match status" value="1"/>
</dbReference>
<dbReference type="Gene3D" id="3.30.70.260">
    <property type="match status" value="1"/>
</dbReference>
<dbReference type="HAMAP" id="MF_00267">
    <property type="entry name" value="MinC"/>
    <property type="match status" value="1"/>
</dbReference>
<dbReference type="InterPro" id="IPR016098">
    <property type="entry name" value="CAP/MinC_C"/>
</dbReference>
<dbReference type="InterPro" id="IPR013033">
    <property type="entry name" value="MinC"/>
</dbReference>
<dbReference type="InterPro" id="IPR036145">
    <property type="entry name" value="MinC_C_sf"/>
</dbReference>
<dbReference type="InterPro" id="IPR007874">
    <property type="entry name" value="MinC_N"/>
</dbReference>
<dbReference type="InterPro" id="IPR005526">
    <property type="entry name" value="Septum_form_inhib_MinC_C"/>
</dbReference>
<dbReference type="NCBIfam" id="TIGR01222">
    <property type="entry name" value="minC"/>
    <property type="match status" value="1"/>
</dbReference>
<dbReference type="PANTHER" id="PTHR34108">
    <property type="entry name" value="SEPTUM SITE-DETERMINING PROTEIN MINC"/>
    <property type="match status" value="1"/>
</dbReference>
<dbReference type="PANTHER" id="PTHR34108:SF1">
    <property type="entry name" value="SEPTUM SITE-DETERMINING PROTEIN MINC"/>
    <property type="match status" value="1"/>
</dbReference>
<dbReference type="Pfam" id="PF03775">
    <property type="entry name" value="MinC_C"/>
    <property type="match status" value="1"/>
</dbReference>
<dbReference type="Pfam" id="PF05209">
    <property type="entry name" value="MinC_N"/>
    <property type="match status" value="1"/>
</dbReference>
<dbReference type="SUPFAM" id="SSF63848">
    <property type="entry name" value="Cell-division inhibitor MinC, C-terminal domain"/>
    <property type="match status" value="1"/>
</dbReference>
<organism>
    <name type="scientific">Escherichia coli O139:H28 (strain E24377A / ETEC)</name>
    <dbReference type="NCBI Taxonomy" id="331111"/>
    <lineage>
        <taxon>Bacteria</taxon>
        <taxon>Pseudomonadati</taxon>
        <taxon>Pseudomonadota</taxon>
        <taxon>Gammaproteobacteria</taxon>
        <taxon>Enterobacterales</taxon>
        <taxon>Enterobacteriaceae</taxon>
        <taxon>Escherichia</taxon>
    </lineage>
</organism>
<gene>
    <name evidence="1" type="primary">minC</name>
    <name type="ordered locus">EcE24377A_1320</name>
</gene>
<reference key="1">
    <citation type="journal article" date="2008" name="J. Bacteriol.">
        <title>The pangenome structure of Escherichia coli: comparative genomic analysis of E. coli commensal and pathogenic isolates.</title>
        <authorList>
            <person name="Rasko D.A."/>
            <person name="Rosovitz M.J."/>
            <person name="Myers G.S.A."/>
            <person name="Mongodin E.F."/>
            <person name="Fricke W.F."/>
            <person name="Gajer P."/>
            <person name="Crabtree J."/>
            <person name="Sebaihia M."/>
            <person name="Thomson N.R."/>
            <person name="Chaudhuri R."/>
            <person name="Henderson I.R."/>
            <person name="Sperandio V."/>
            <person name="Ravel J."/>
        </authorList>
    </citation>
    <scope>NUCLEOTIDE SEQUENCE [LARGE SCALE GENOMIC DNA]</scope>
    <source>
        <strain>E24377A / ETEC</strain>
    </source>
</reference>
<proteinExistence type="inferred from homology"/>
<evidence type="ECO:0000255" key="1">
    <source>
        <dbReference type="HAMAP-Rule" id="MF_00267"/>
    </source>
</evidence>
<evidence type="ECO:0000256" key="2">
    <source>
        <dbReference type="SAM" id="MobiDB-lite"/>
    </source>
</evidence>